<reference key="1">
    <citation type="journal article" date="2004" name="DNA Res.">
        <title>Complete nucleotide sequence of the sugarcane (Saccharum officinarum) chloroplast genome: a comparative analysis of four monocot chloroplast genomes.</title>
        <authorList>
            <person name="Asano T."/>
            <person name="Tsudzuki T."/>
            <person name="Takahashi S."/>
            <person name="Shimada H."/>
            <person name="Kadowaki K."/>
        </authorList>
    </citation>
    <scope>NUCLEOTIDE SEQUENCE [LARGE SCALE GENOMIC DNA]</scope>
</reference>
<dbReference type="EMBL" id="AP006714">
    <property type="protein sequence ID" value="BAD27332.1"/>
    <property type="molecule type" value="Genomic_DNA"/>
</dbReference>
<dbReference type="RefSeq" id="YP_009389610.1">
    <property type="nucleotide sequence ID" value="NC_035224.1"/>
</dbReference>
<dbReference type="SMR" id="Q6ENS4"/>
<dbReference type="GeneID" id="33347851"/>
<dbReference type="GO" id="GO:0009507">
    <property type="term" value="C:chloroplast"/>
    <property type="evidence" value="ECO:0007669"/>
    <property type="project" value="UniProtKB-SubCell"/>
</dbReference>
<dbReference type="GO" id="GO:0015934">
    <property type="term" value="C:large ribosomal subunit"/>
    <property type="evidence" value="ECO:0007669"/>
    <property type="project" value="InterPro"/>
</dbReference>
<dbReference type="GO" id="GO:0019843">
    <property type="term" value="F:rRNA binding"/>
    <property type="evidence" value="ECO:0007669"/>
    <property type="project" value="UniProtKB-UniRule"/>
</dbReference>
<dbReference type="GO" id="GO:0003735">
    <property type="term" value="F:structural constituent of ribosome"/>
    <property type="evidence" value="ECO:0007669"/>
    <property type="project" value="InterPro"/>
</dbReference>
<dbReference type="GO" id="GO:0006412">
    <property type="term" value="P:translation"/>
    <property type="evidence" value="ECO:0007669"/>
    <property type="project" value="UniProtKB-UniRule"/>
</dbReference>
<dbReference type="CDD" id="cd00336">
    <property type="entry name" value="Ribosomal_L22"/>
    <property type="match status" value="1"/>
</dbReference>
<dbReference type="FunFam" id="3.90.470.10:FF:000004">
    <property type="entry name" value="50S ribosomal protein L22, chloroplastic"/>
    <property type="match status" value="1"/>
</dbReference>
<dbReference type="Gene3D" id="3.90.470.10">
    <property type="entry name" value="Ribosomal protein L22/L17"/>
    <property type="match status" value="1"/>
</dbReference>
<dbReference type="HAMAP" id="MF_01331_B">
    <property type="entry name" value="Ribosomal_uL22_B"/>
    <property type="match status" value="1"/>
</dbReference>
<dbReference type="InterPro" id="IPR001063">
    <property type="entry name" value="Ribosomal_uL22"/>
</dbReference>
<dbReference type="InterPro" id="IPR005727">
    <property type="entry name" value="Ribosomal_uL22_bac/chlpt-type"/>
</dbReference>
<dbReference type="InterPro" id="IPR047867">
    <property type="entry name" value="Ribosomal_uL22_bac/org-type"/>
</dbReference>
<dbReference type="InterPro" id="IPR018260">
    <property type="entry name" value="Ribosomal_uL22_CS"/>
</dbReference>
<dbReference type="InterPro" id="IPR036394">
    <property type="entry name" value="Ribosomal_uL22_sf"/>
</dbReference>
<dbReference type="NCBIfam" id="TIGR01044">
    <property type="entry name" value="rplV_bact"/>
    <property type="match status" value="1"/>
</dbReference>
<dbReference type="PANTHER" id="PTHR13501">
    <property type="entry name" value="CHLOROPLAST 50S RIBOSOMAL PROTEIN L22-RELATED"/>
    <property type="match status" value="1"/>
</dbReference>
<dbReference type="PANTHER" id="PTHR13501:SF10">
    <property type="entry name" value="LARGE RIBOSOMAL SUBUNIT PROTEIN UL22M"/>
    <property type="match status" value="1"/>
</dbReference>
<dbReference type="Pfam" id="PF00237">
    <property type="entry name" value="Ribosomal_L22"/>
    <property type="match status" value="1"/>
</dbReference>
<dbReference type="SUPFAM" id="SSF54843">
    <property type="entry name" value="Ribosomal protein L22"/>
    <property type="match status" value="1"/>
</dbReference>
<dbReference type="PROSITE" id="PS00464">
    <property type="entry name" value="RIBOSOMAL_L22"/>
    <property type="match status" value="1"/>
</dbReference>
<gene>
    <name type="primary">rpl22</name>
</gene>
<feature type="chain" id="PRO_0000125326" description="Large ribosomal subunit protein uL22c">
    <location>
        <begin position="1"/>
        <end position="148"/>
    </location>
</feature>
<proteinExistence type="inferred from homology"/>
<geneLocation type="chloroplast"/>
<organism>
    <name type="scientific">Saccharum officinarum</name>
    <name type="common">Sugarcane</name>
    <dbReference type="NCBI Taxonomy" id="4547"/>
    <lineage>
        <taxon>Eukaryota</taxon>
        <taxon>Viridiplantae</taxon>
        <taxon>Streptophyta</taxon>
        <taxon>Embryophyta</taxon>
        <taxon>Tracheophyta</taxon>
        <taxon>Spermatophyta</taxon>
        <taxon>Magnoliopsida</taxon>
        <taxon>Liliopsida</taxon>
        <taxon>Poales</taxon>
        <taxon>Poaceae</taxon>
        <taxon>PACMAD clade</taxon>
        <taxon>Panicoideae</taxon>
        <taxon>Andropogonodae</taxon>
        <taxon>Andropogoneae</taxon>
        <taxon>Saccharinae</taxon>
        <taxon>Saccharum</taxon>
        <taxon>Saccharum officinarum species complex</taxon>
    </lineage>
</organism>
<accession>Q6ENS4</accession>
<protein>
    <recommendedName>
        <fullName evidence="2">Large ribosomal subunit protein uL22c</fullName>
    </recommendedName>
    <alternativeName>
        <fullName>50S ribosomal protein L22, chloroplastic</fullName>
    </alternativeName>
</protein>
<keyword id="KW-0150">Chloroplast</keyword>
<keyword id="KW-0934">Plastid</keyword>
<keyword id="KW-0687">Ribonucleoprotein</keyword>
<keyword id="KW-0689">Ribosomal protein</keyword>
<keyword id="KW-0694">RNA-binding</keyword>
<keyword id="KW-0699">rRNA-binding</keyword>
<name>RK22_SACOF</name>
<evidence type="ECO:0000250" key="1"/>
<evidence type="ECO:0000305" key="2"/>
<sequence>MTSFKLVKYTPRIKKKKGLRKLARKVPTDRLLKFERVFKAQKRIHMSVFKAQRVLDEIRWRYYEETVMILNLMPYRASYPILKLVYSAAANATHYRDFDKTNLFITKAEVSRSTIMKKFRPRARGRSYSIKKTMCNITIVLNIVKKSK</sequence>
<comment type="function">
    <text evidence="1">This protein binds specifically to 23S rRNA.</text>
</comment>
<comment type="function">
    <text evidence="1">The globular domain of the protein is located near the polypeptide exit tunnel on the outside of the subunit, while an extended beta-hairpin is found that lines the wall of the exit tunnel in the center of the 70S ribosome.</text>
</comment>
<comment type="subunit">
    <text evidence="1">Part of the 50S ribosomal subunit.</text>
</comment>
<comment type="subcellular location">
    <subcellularLocation>
        <location>Plastid</location>
        <location>Chloroplast</location>
    </subcellularLocation>
</comment>
<comment type="similarity">
    <text evidence="2">Belongs to the universal ribosomal protein uL22 family.</text>
</comment>